<name>ARGC_BACSU</name>
<keyword id="KW-0028">Amino-acid biosynthesis</keyword>
<keyword id="KW-0055">Arginine biosynthesis</keyword>
<keyword id="KW-0963">Cytoplasm</keyword>
<keyword id="KW-0521">NADP</keyword>
<keyword id="KW-0560">Oxidoreductase</keyword>
<keyword id="KW-1185">Reference proteome</keyword>
<organism>
    <name type="scientific">Bacillus subtilis (strain 168)</name>
    <dbReference type="NCBI Taxonomy" id="224308"/>
    <lineage>
        <taxon>Bacteria</taxon>
        <taxon>Bacillati</taxon>
        <taxon>Bacillota</taxon>
        <taxon>Bacilli</taxon>
        <taxon>Bacillales</taxon>
        <taxon>Bacillaceae</taxon>
        <taxon>Bacillus</taxon>
    </lineage>
</organism>
<proteinExistence type="inferred from homology"/>
<comment type="function">
    <text evidence="1">Catalyzes the NADPH-dependent reduction of N-acetyl-5-glutamyl phosphate to yield N-acetyl-L-glutamate 5-semialdehyde.</text>
</comment>
<comment type="catalytic activity">
    <reaction evidence="1">
        <text>N-acetyl-L-glutamate 5-semialdehyde + phosphate + NADP(+) = N-acetyl-L-glutamyl 5-phosphate + NADPH + H(+)</text>
        <dbReference type="Rhea" id="RHEA:21588"/>
        <dbReference type="ChEBI" id="CHEBI:15378"/>
        <dbReference type="ChEBI" id="CHEBI:29123"/>
        <dbReference type="ChEBI" id="CHEBI:43474"/>
        <dbReference type="ChEBI" id="CHEBI:57783"/>
        <dbReference type="ChEBI" id="CHEBI:57936"/>
        <dbReference type="ChEBI" id="CHEBI:58349"/>
        <dbReference type="EC" id="1.2.1.38"/>
    </reaction>
</comment>
<comment type="pathway">
    <text evidence="1">Amino-acid biosynthesis; L-arginine biosynthesis; N(2)-acetyl-L-ornithine from L-glutamate: step 3/4.</text>
</comment>
<comment type="subcellular location">
    <subcellularLocation>
        <location evidence="1">Cytoplasm</location>
    </subcellularLocation>
</comment>
<comment type="similarity">
    <text evidence="1">Belongs to the NAGSA dehydrogenase family. Type 1 subfamily.</text>
</comment>
<sequence length="345" mass="37960">MKIGIVGATGYGGTELVRILSHHPHAEECILYSSSGEGNVYSEGYPHLTGLADQQLKPIDMNTIKHEIDIMFLAAPPGVSSELTPKLADAGITVIDLSGDLRIKEPAEYEKWYKRTAAPKAVIQEAVYGLAELNQLQIQQAKLIANPGCFPTAVLLGLAPLAQKKLLDESFVIVDAKTGVSGAGRKASMGTHFSELNDNFKIYKVNEHQHTPEIEQALNEWQPGLGPITFSAHLVPMTRGIMATMYTRLTCDLTADDLHDLYSEFYQDSYFVRVRPKGQYPQTKEVYGSNFCDIAVTLDERTNRVTIVSVIDNLMKGAAGQAVQNFNLMNGWNEETGLTITPIYP</sequence>
<gene>
    <name evidence="1" type="primary">argC</name>
    <name type="ordered locus">BSU11190</name>
</gene>
<dbReference type="EC" id="1.2.1.38" evidence="1"/>
<dbReference type="EMBL" id="X52834">
    <property type="protein sequence ID" value="CAA37016.1"/>
    <property type="molecule type" value="Genomic_DNA"/>
</dbReference>
<dbReference type="EMBL" id="Z26919">
    <property type="protein sequence ID" value="CAA81543.1"/>
    <property type="molecule type" value="Genomic_DNA"/>
</dbReference>
<dbReference type="EMBL" id="Z79580">
    <property type="protein sequence ID" value="CAB01842.1"/>
    <property type="molecule type" value="Genomic_DNA"/>
</dbReference>
<dbReference type="EMBL" id="Y09476">
    <property type="protein sequence ID" value="CAA70638.1"/>
    <property type="molecule type" value="Genomic_DNA"/>
</dbReference>
<dbReference type="EMBL" id="AL009126">
    <property type="protein sequence ID" value="CAB12960.2"/>
    <property type="molecule type" value="Genomic_DNA"/>
</dbReference>
<dbReference type="EMBL" id="M15420">
    <property type="protein sequence ID" value="AAA22248.1"/>
    <property type="molecule type" value="Genomic_DNA"/>
</dbReference>
<dbReference type="PIR" id="I40372">
    <property type="entry name" value="I40372"/>
</dbReference>
<dbReference type="RefSeq" id="NP_389001.2">
    <property type="nucleotide sequence ID" value="NC_000964.3"/>
</dbReference>
<dbReference type="RefSeq" id="WP_003245768.1">
    <property type="nucleotide sequence ID" value="NZ_OZ025638.1"/>
</dbReference>
<dbReference type="RefSeq" id="WP_009966985.1">
    <property type="nucleotide sequence ID" value="NZ_CM000487.1"/>
</dbReference>
<dbReference type="SMR" id="P23715"/>
<dbReference type="FunCoup" id="P23715">
    <property type="interactions" value="454"/>
</dbReference>
<dbReference type="IntAct" id="P23715">
    <property type="interactions" value="3"/>
</dbReference>
<dbReference type="MINT" id="P23715"/>
<dbReference type="STRING" id="224308.BSU11190"/>
<dbReference type="PaxDb" id="224308-BSU11190"/>
<dbReference type="EnsemblBacteria" id="CAB12960">
    <property type="protein sequence ID" value="CAB12960"/>
    <property type="gene ID" value="BSU_11190"/>
</dbReference>
<dbReference type="GeneID" id="936389"/>
<dbReference type="KEGG" id="bsu:BSU11190"/>
<dbReference type="PATRIC" id="fig|224308.179.peg.1204"/>
<dbReference type="eggNOG" id="COG0002">
    <property type="taxonomic scope" value="Bacteria"/>
</dbReference>
<dbReference type="InParanoid" id="P23715"/>
<dbReference type="OrthoDB" id="9801289at2"/>
<dbReference type="PhylomeDB" id="P23715"/>
<dbReference type="BioCyc" id="BSUB:BSU11190-MONOMER"/>
<dbReference type="UniPathway" id="UPA00068">
    <property type="reaction ID" value="UER00108"/>
</dbReference>
<dbReference type="Proteomes" id="UP000001570">
    <property type="component" value="Chromosome"/>
</dbReference>
<dbReference type="GO" id="GO:0005737">
    <property type="term" value="C:cytoplasm"/>
    <property type="evidence" value="ECO:0007669"/>
    <property type="project" value="UniProtKB-SubCell"/>
</dbReference>
<dbReference type="GO" id="GO:0003942">
    <property type="term" value="F:N-acetyl-gamma-glutamyl-phosphate reductase activity"/>
    <property type="evidence" value="ECO:0007669"/>
    <property type="project" value="UniProtKB-UniRule"/>
</dbReference>
<dbReference type="GO" id="GO:0051287">
    <property type="term" value="F:NAD binding"/>
    <property type="evidence" value="ECO:0007669"/>
    <property type="project" value="InterPro"/>
</dbReference>
<dbReference type="GO" id="GO:0070401">
    <property type="term" value="F:NADP+ binding"/>
    <property type="evidence" value="ECO:0007669"/>
    <property type="project" value="InterPro"/>
</dbReference>
<dbReference type="GO" id="GO:0006526">
    <property type="term" value="P:L-arginine biosynthetic process"/>
    <property type="evidence" value="ECO:0007669"/>
    <property type="project" value="UniProtKB-UniRule"/>
</dbReference>
<dbReference type="CDD" id="cd23934">
    <property type="entry name" value="AGPR_1_C"/>
    <property type="match status" value="1"/>
</dbReference>
<dbReference type="CDD" id="cd17895">
    <property type="entry name" value="AGPR_1_N"/>
    <property type="match status" value="1"/>
</dbReference>
<dbReference type="FunFam" id="3.30.360.10:FF:000014">
    <property type="entry name" value="N-acetyl-gamma-glutamyl-phosphate reductase"/>
    <property type="match status" value="1"/>
</dbReference>
<dbReference type="Gene3D" id="3.30.360.10">
    <property type="entry name" value="Dihydrodipicolinate Reductase, domain 2"/>
    <property type="match status" value="1"/>
</dbReference>
<dbReference type="Gene3D" id="3.40.50.720">
    <property type="entry name" value="NAD(P)-binding Rossmann-like Domain"/>
    <property type="match status" value="1"/>
</dbReference>
<dbReference type="HAMAP" id="MF_00150">
    <property type="entry name" value="ArgC_type1"/>
    <property type="match status" value="1"/>
</dbReference>
<dbReference type="InterPro" id="IPR023013">
    <property type="entry name" value="AGPR_AS"/>
</dbReference>
<dbReference type="InterPro" id="IPR000706">
    <property type="entry name" value="AGPR_type-1"/>
</dbReference>
<dbReference type="InterPro" id="IPR036291">
    <property type="entry name" value="NAD(P)-bd_dom_sf"/>
</dbReference>
<dbReference type="InterPro" id="IPR050085">
    <property type="entry name" value="NAGSA_dehydrogenase"/>
</dbReference>
<dbReference type="InterPro" id="IPR000534">
    <property type="entry name" value="Semialdehyde_DH_NAD-bd"/>
</dbReference>
<dbReference type="NCBIfam" id="TIGR01850">
    <property type="entry name" value="argC"/>
    <property type="match status" value="1"/>
</dbReference>
<dbReference type="PANTHER" id="PTHR32338:SF10">
    <property type="entry name" value="N-ACETYL-GAMMA-GLUTAMYL-PHOSPHATE REDUCTASE, CHLOROPLASTIC-RELATED"/>
    <property type="match status" value="1"/>
</dbReference>
<dbReference type="PANTHER" id="PTHR32338">
    <property type="entry name" value="N-ACETYL-GAMMA-GLUTAMYL-PHOSPHATE REDUCTASE, CHLOROPLASTIC-RELATED-RELATED"/>
    <property type="match status" value="1"/>
</dbReference>
<dbReference type="Pfam" id="PF01118">
    <property type="entry name" value="Semialdhyde_dh"/>
    <property type="match status" value="1"/>
</dbReference>
<dbReference type="Pfam" id="PF22698">
    <property type="entry name" value="Semialdhyde_dhC_1"/>
    <property type="match status" value="1"/>
</dbReference>
<dbReference type="SMART" id="SM00859">
    <property type="entry name" value="Semialdhyde_dh"/>
    <property type="match status" value="1"/>
</dbReference>
<dbReference type="SUPFAM" id="SSF55347">
    <property type="entry name" value="Glyceraldehyde-3-phosphate dehydrogenase-like, C-terminal domain"/>
    <property type="match status" value="1"/>
</dbReference>
<dbReference type="SUPFAM" id="SSF51735">
    <property type="entry name" value="NAD(P)-binding Rossmann-fold domains"/>
    <property type="match status" value="1"/>
</dbReference>
<dbReference type="PROSITE" id="PS01224">
    <property type="entry name" value="ARGC"/>
    <property type="match status" value="1"/>
</dbReference>
<protein>
    <recommendedName>
        <fullName evidence="1">N-acetyl-gamma-glutamyl-phosphate reductase</fullName>
        <shortName evidence="1">AGPR</shortName>
        <ecNumber evidence="1">1.2.1.38</ecNumber>
    </recommendedName>
    <alternativeName>
        <fullName evidence="1">N-acetyl-glutamate semialdehyde dehydrogenase</fullName>
        <shortName evidence="1">NAGSA dehydrogenase</shortName>
    </alternativeName>
</protein>
<evidence type="ECO:0000255" key="1">
    <source>
        <dbReference type="HAMAP-Rule" id="MF_00150"/>
    </source>
</evidence>
<evidence type="ECO:0000305" key="2"/>
<reference key="1">
    <citation type="journal article" date="1990" name="Nucleic Acids Res.">
        <title>Nucleotide sequence of the Bacillus subtilis argC gene encoding N-acetylglutamate-gamma-semialdehyde dehydrogenase.</title>
        <authorList>
            <person name="Smith M.C.M."/>
            <person name="Mountain A."/>
            <person name="Baumberg S."/>
        </authorList>
    </citation>
    <scope>NUCLEOTIDE SEQUENCE [GENOMIC DNA]</scope>
    <source>
        <strain>168 / EMG50</strain>
    </source>
</reference>
<reference key="2">
    <citation type="journal article" date="1994" name="Microbiology">
        <title>Sequence and analysis of the citrulline biosynthetic operon argC-F from Bacillus subtilis.</title>
        <authorList>
            <person name="O'Reilly M."/>
            <person name="Devine K.M."/>
        </authorList>
    </citation>
    <scope>NUCLEOTIDE SEQUENCE [GENOMIC DNA]</scope>
    <source>
        <strain>168</strain>
    </source>
</reference>
<reference key="3">
    <citation type="journal article" date="1997" name="Microbiology">
        <title>A 10.3 kbp segment from nprB to argJ at the 102 degrees region of the Bacillus subtilis chromosome.</title>
        <authorList>
            <person name="Levine A."/>
            <person name="Vannier F."/>
            <person name="Roche B."/>
            <person name="Autret S."/>
            <person name="Mavel D."/>
            <person name="Seror S.J."/>
        </authorList>
    </citation>
    <scope>NUCLEOTIDE SEQUENCE [GENOMIC DNA]</scope>
    <source>
        <strain>168</strain>
    </source>
</reference>
<reference key="4">
    <citation type="journal article" date="1997" name="Microbiology">
        <title>Sequencing of regions downstream of addA (98 degrees) and citG (289 degrees) in Bacillus subtilis.</title>
        <authorList>
            <person name="Medina N."/>
            <person name="Vannier F."/>
            <person name="Roche B."/>
            <person name="Autret S."/>
            <person name="Levine A."/>
            <person name="Seror S.J."/>
        </authorList>
    </citation>
    <scope>NUCLEOTIDE SEQUENCE [GENOMIC DNA]</scope>
    <source>
        <strain>168</strain>
    </source>
</reference>
<reference key="5">
    <citation type="journal article" date="1997" name="Nature">
        <title>The complete genome sequence of the Gram-positive bacterium Bacillus subtilis.</title>
        <authorList>
            <person name="Kunst F."/>
            <person name="Ogasawara N."/>
            <person name="Moszer I."/>
            <person name="Albertini A.M."/>
            <person name="Alloni G."/>
            <person name="Azevedo V."/>
            <person name="Bertero M.G."/>
            <person name="Bessieres P."/>
            <person name="Bolotin A."/>
            <person name="Borchert S."/>
            <person name="Borriss R."/>
            <person name="Boursier L."/>
            <person name="Brans A."/>
            <person name="Braun M."/>
            <person name="Brignell S.C."/>
            <person name="Bron S."/>
            <person name="Brouillet S."/>
            <person name="Bruschi C.V."/>
            <person name="Caldwell B."/>
            <person name="Capuano V."/>
            <person name="Carter N.M."/>
            <person name="Choi S.-K."/>
            <person name="Codani J.-J."/>
            <person name="Connerton I.F."/>
            <person name="Cummings N.J."/>
            <person name="Daniel R.A."/>
            <person name="Denizot F."/>
            <person name="Devine K.M."/>
            <person name="Duesterhoeft A."/>
            <person name="Ehrlich S.D."/>
            <person name="Emmerson P.T."/>
            <person name="Entian K.-D."/>
            <person name="Errington J."/>
            <person name="Fabret C."/>
            <person name="Ferrari E."/>
            <person name="Foulger D."/>
            <person name="Fritz C."/>
            <person name="Fujita M."/>
            <person name="Fujita Y."/>
            <person name="Fuma S."/>
            <person name="Galizzi A."/>
            <person name="Galleron N."/>
            <person name="Ghim S.-Y."/>
            <person name="Glaser P."/>
            <person name="Goffeau A."/>
            <person name="Golightly E.J."/>
            <person name="Grandi G."/>
            <person name="Guiseppi G."/>
            <person name="Guy B.J."/>
            <person name="Haga K."/>
            <person name="Haiech J."/>
            <person name="Harwood C.R."/>
            <person name="Henaut A."/>
            <person name="Hilbert H."/>
            <person name="Holsappel S."/>
            <person name="Hosono S."/>
            <person name="Hullo M.-F."/>
            <person name="Itaya M."/>
            <person name="Jones L.-M."/>
            <person name="Joris B."/>
            <person name="Karamata D."/>
            <person name="Kasahara Y."/>
            <person name="Klaerr-Blanchard M."/>
            <person name="Klein C."/>
            <person name="Kobayashi Y."/>
            <person name="Koetter P."/>
            <person name="Koningstein G."/>
            <person name="Krogh S."/>
            <person name="Kumano M."/>
            <person name="Kurita K."/>
            <person name="Lapidus A."/>
            <person name="Lardinois S."/>
            <person name="Lauber J."/>
            <person name="Lazarevic V."/>
            <person name="Lee S.-M."/>
            <person name="Levine A."/>
            <person name="Liu H."/>
            <person name="Masuda S."/>
            <person name="Mauel C."/>
            <person name="Medigue C."/>
            <person name="Medina N."/>
            <person name="Mellado R.P."/>
            <person name="Mizuno M."/>
            <person name="Moestl D."/>
            <person name="Nakai S."/>
            <person name="Noback M."/>
            <person name="Noone D."/>
            <person name="O'Reilly M."/>
            <person name="Ogawa K."/>
            <person name="Ogiwara A."/>
            <person name="Oudega B."/>
            <person name="Park S.-H."/>
            <person name="Parro V."/>
            <person name="Pohl T.M."/>
            <person name="Portetelle D."/>
            <person name="Porwollik S."/>
            <person name="Prescott A.M."/>
            <person name="Presecan E."/>
            <person name="Pujic P."/>
            <person name="Purnelle B."/>
            <person name="Rapoport G."/>
            <person name="Rey M."/>
            <person name="Reynolds S."/>
            <person name="Rieger M."/>
            <person name="Rivolta C."/>
            <person name="Rocha E."/>
            <person name="Roche B."/>
            <person name="Rose M."/>
            <person name="Sadaie Y."/>
            <person name="Sato T."/>
            <person name="Scanlan E."/>
            <person name="Schleich S."/>
            <person name="Schroeter R."/>
            <person name="Scoffone F."/>
            <person name="Sekiguchi J."/>
            <person name="Sekowska A."/>
            <person name="Seror S.J."/>
            <person name="Serror P."/>
            <person name="Shin B.-S."/>
            <person name="Soldo B."/>
            <person name="Sorokin A."/>
            <person name="Tacconi E."/>
            <person name="Takagi T."/>
            <person name="Takahashi H."/>
            <person name="Takemaru K."/>
            <person name="Takeuchi M."/>
            <person name="Tamakoshi A."/>
            <person name="Tanaka T."/>
            <person name="Terpstra P."/>
            <person name="Tognoni A."/>
            <person name="Tosato V."/>
            <person name="Uchiyama S."/>
            <person name="Vandenbol M."/>
            <person name="Vannier F."/>
            <person name="Vassarotti A."/>
            <person name="Viari A."/>
            <person name="Wambutt R."/>
            <person name="Wedler E."/>
            <person name="Wedler H."/>
            <person name="Weitzenegger T."/>
            <person name="Winters P."/>
            <person name="Wipat A."/>
            <person name="Yamamoto H."/>
            <person name="Yamane K."/>
            <person name="Yasumoto K."/>
            <person name="Yata K."/>
            <person name="Yoshida K."/>
            <person name="Yoshikawa H.-F."/>
            <person name="Zumstein E."/>
            <person name="Yoshikawa H."/>
            <person name="Danchin A."/>
        </authorList>
    </citation>
    <scope>NUCLEOTIDE SEQUENCE [LARGE SCALE GENOMIC DNA]</scope>
    <source>
        <strain>168</strain>
    </source>
</reference>
<reference key="6">
    <citation type="journal article" date="2009" name="Microbiology">
        <title>From a consortium sequence to a unified sequence: the Bacillus subtilis 168 reference genome a decade later.</title>
        <authorList>
            <person name="Barbe V."/>
            <person name="Cruveiller S."/>
            <person name="Kunst F."/>
            <person name="Lenoble P."/>
            <person name="Meurice G."/>
            <person name="Sekowska A."/>
            <person name="Vallenet D."/>
            <person name="Wang T."/>
            <person name="Moszer I."/>
            <person name="Medigue C."/>
            <person name="Danchin A."/>
        </authorList>
    </citation>
    <scope>SEQUENCE REVISION TO 235 AND 340</scope>
</reference>
<reference key="7">
    <citation type="journal article" date="1986" name="Gene">
        <title>Sequence analysis of the Bacillus subtilis argC promoter region.</title>
        <authorList>
            <person name="Smith M.C.M."/>
            <person name="Mountain A."/>
            <person name="Baumberg S."/>
        </authorList>
    </citation>
    <scope>NUCLEOTIDE SEQUENCE [GENOMIC DNA] OF 1-56</scope>
</reference>
<feature type="chain" id="PRO_0000112385" description="N-acetyl-gamma-glutamyl-phosphate reductase">
    <location>
        <begin position="1"/>
        <end position="345"/>
    </location>
</feature>
<feature type="active site" evidence="1">
    <location>
        <position position="149"/>
    </location>
</feature>
<feature type="sequence conflict" description="In Ref. 1; CAA37016 and 2; CAA81543." evidence="2" ref="1 2">
    <original>V</original>
    <variation>F</variation>
    <location>
        <position position="235"/>
    </location>
</feature>
<feature type="sequence conflict" description="In Ref. 2; CAA81543, 3; CAB01842 and 4; CAA70638." evidence="2" ref="2 3 4">
    <original>I</original>
    <variation>II</variation>
    <location>
        <position position="340"/>
    </location>
</feature>
<accession>P23715</accession>
<accession>O08146</accession>
<accession>P70953</accession>